<dbReference type="EMBL" id="AJ002571">
    <property type="protein sequence ID" value="CAA05610.1"/>
    <property type="molecule type" value="Genomic_DNA"/>
</dbReference>
<dbReference type="EMBL" id="AL009126">
    <property type="protein sequence ID" value="CAB13190.1"/>
    <property type="molecule type" value="Genomic_DNA"/>
</dbReference>
<dbReference type="PIR" id="H69859">
    <property type="entry name" value="H69859"/>
</dbReference>
<dbReference type="RefSeq" id="NP_389216.1">
    <property type="nucleotide sequence ID" value="NC_000964.3"/>
</dbReference>
<dbReference type="RefSeq" id="WP_003245766.1">
    <property type="nucleotide sequence ID" value="NZ_OZ025638.1"/>
</dbReference>
<dbReference type="SMR" id="O34763"/>
<dbReference type="FunCoup" id="O34763">
    <property type="interactions" value="31"/>
</dbReference>
<dbReference type="STRING" id="224308.BSU13330"/>
<dbReference type="PaxDb" id="224308-BSU13330"/>
<dbReference type="EnsemblBacteria" id="CAB13190">
    <property type="protein sequence ID" value="CAB13190"/>
    <property type="gene ID" value="BSU_13330"/>
</dbReference>
<dbReference type="GeneID" id="939391"/>
<dbReference type="KEGG" id="bsu:BSU13330"/>
<dbReference type="PATRIC" id="fig|224308.179.peg.1448"/>
<dbReference type="eggNOG" id="ENOG5030DGU">
    <property type="taxonomic scope" value="Bacteria"/>
</dbReference>
<dbReference type="InParanoid" id="O34763"/>
<dbReference type="OrthoDB" id="2893914at2"/>
<dbReference type="BioCyc" id="BSUB:BSU13330-MONOMER"/>
<dbReference type="Proteomes" id="UP000001570">
    <property type="component" value="Chromosome"/>
</dbReference>
<accession>O34763</accession>
<evidence type="ECO:0000269" key="1">
    <source>
    </source>
</evidence>
<feature type="chain" id="PRO_0000049608" description="Stress response protein YkoL">
    <location>
        <begin position="1"/>
        <end position="60"/>
    </location>
</feature>
<sequence length="60" mass="7413">MSNLLKSALEKERRHYSEKLYQIGVYNKEVMNKMTISELRKEYAYFFRSITNHKNYPYTR</sequence>
<organism>
    <name type="scientific">Bacillus subtilis (strain 168)</name>
    <dbReference type="NCBI Taxonomy" id="224308"/>
    <lineage>
        <taxon>Bacteria</taxon>
        <taxon>Bacillati</taxon>
        <taxon>Bacillota</taxon>
        <taxon>Bacilli</taxon>
        <taxon>Bacillales</taxon>
        <taxon>Bacillaceae</taxon>
        <taxon>Bacillus</taxon>
    </lineage>
</organism>
<protein>
    <recommendedName>
        <fullName>Stress response protein YkoL</fullName>
    </recommendedName>
</protein>
<proteinExistence type="evidence at transcript level"/>
<gene>
    <name type="primary">ykoL</name>
    <name type="ordered locus">BSU13330</name>
</gene>
<name>YKOL_BACSU</name>
<reference key="1">
    <citation type="submission" date="1997-11" db="EMBL/GenBank/DDBJ databases">
        <title>Sequence of the Bacillus subtilis genome between xlyA and ykoR.</title>
        <authorList>
            <person name="Devine K.M."/>
        </authorList>
    </citation>
    <scope>NUCLEOTIDE SEQUENCE [GENOMIC DNA]</scope>
    <source>
        <strain>168</strain>
    </source>
</reference>
<reference key="2">
    <citation type="journal article" date="1997" name="Nature">
        <title>The complete genome sequence of the Gram-positive bacterium Bacillus subtilis.</title>
        <authorList>
            <person name="Kunst F."/>
            <person name="Ogasawara N."/>
            <person name="Moszer I."/>
            <person name="Albertini A.M."/>
            <person name="Alloni G."/>
            <person name="Azevedo V."/>
            <person name="Bertero M.G."/>
            <person name="Bessieres P."/>
            <person name="Bolotin A."/>
            <person name="Borchert S."/>
            <person name="Borriss R."/>
            <person name="Boursier L."/>
            <person name="Brans A."/>
            <person name="Braun M."/>
            <person name="Brignell S.C."/>
            <person name="Bron S."/>
            <person name="Brouillet S."/>
            <person name="Bruschi C.V."/>
            <person name="Caldwell B."/>
            <person name="Capuano V."/>
            <person name="Carter N.M."/>
            <person name="Choi S.-K."/>
            <person name="Codani J.-J."/>
            <person name="Connerton I.F."/>
            <person name="Cummings N.J."/>
            <person name="Daniel R.A."/>
            <person name="Denizot F."/>
            <person name="Devine K.M."/>
            <person name="Duesterhoeft A."/>
            <person name="Ehrlich S.D."/>
            <person name="Emmerson P.T."/>
            <person name="Entian K.-D."/>
            <person name="Errington J."/>
            <person name="Fabret C."/>
            <person name="Ferrari E."/>
            <person name="Foulger D."/>
            <person name="Fritz C."/>
            <person name="Fujita M."/>
            <person name="Fujita Y."/>
            <person name="Fuma S."/>
            <person name="Galizzi A."/>
            <person name="Galleron N."/>
            <person name="Ghim S.-Y."/>
            <person name="Glaser P."/>
            <person name="Goffeau A."/>
            <person name="Golightly E.J."/>
            <person name="Grandi G."/>
            <person name="Guiseppi G."/>
            <person name="Guy B.J."/>
            <person name="Haga K."/>
            <person name="Haiech J."/>
            <person name="Harwood C.R."/>
            <person name="Henaut A."/>
            <person name="Hilbert H."/>
            <person name="Holsappel S."/>
            <person name="Hosono S."/>
            <person name="Hullo M.-F."/>
            <person name="Itaya M."/>
            <person name="Jones L.-M."/>
            <person name="Joris B."/>
            <person name="Karamata D."/>
            <person name="Kasahara Y."/>
            <person name="Klaerr-Blanchard M."/>
            <person name="Klein C."/>
            <person name="Kobayashi Y."/>
            <person name="Koetter P."/>
            <person name="Koningstein G."/>
            <person name="Krogh S."/>
            <person name="Kumano M."/>
            <person name="Kurita K."/>
            <person name="Lapidus A."/>
            <person name="Lardinois S."/>
            <person name="Lauber J."/>
            <person name="Lazarevic V."/>
            <person name="Lee S.-M."/>
            <person name="Levine A."/>
            <person name="Liu H."/>
            <person name="Masuda S."/>
            <person name="Mauel C."/>
            <person name="Medigue C."/>
            <person name="Medina N."/>
            <person name="Mellado R.P."/>
            <person name="Mizuno M."/>
            <person name="Moestl D."/>
            <person name="Nakai S."/>
            <person name="Noback M."/>
            <person name="Noone D."/>
            <person name="O'Reilly M."/>
            <person name="Ogawa K."/>
            <person name="Ogiwara A."/>
            <person name="Oudega B."/>
            <person name="Park S.-H."/>
            <person name="Parro V."/>
            <person name="Pohl T.M."/>
            <person name="Portetelle D."/>
            <person name="Porwollik S."/>
            <person name="Prescott A.M."/>
            <person name="Presecan E."/>
            <person name="Pujic P."/>
            <person name="Purnelle B."/>
            <person name="Rapoport G."/>
            <person name="Rey M."/>
            <person name="Reynolds S."/>
            <person name="Rieger M."/>
            <person name="Rivolta C."/>
            <person name="Rocha E."/>
            <person name="Roche B."/>
            <person name="Rose M."/>
            <person name="Sadaie Y."/>
            <person name="Sato T."/>
            <person name="Scanlan E."/>
            <person name="Schleich S."/>
            <person name="Schroeter R."/>
            <person name="Scoffone F."/>
            <person name="Sekiguchi J."/>
            <person name="Sekowska A."/>
            <person name="Seror S.J."/>
            <person name="Serror P."/>
            <person name="Shin B.-S."/>
            <person name="Soldo B."/>
            <person name="Sorokin A."/>
            <person name="Tacconi E."/>
            <person name="Takagi T."/>
            <person name="Takahashi H."/>
            <person name="Takemaru K."/>
            <person name="Takeuchi M."/>
            <person name="Tamakoshi A."/>
            <person name="Tanaka T."/>
            <person name="Terpstra P."/>
            <person name="Tognoni A."/>
            <person name="Tosato V."/>
            <person name="Uchiyama S."/>
            <person name="Vandenbol M."/>
            <person name="Vannier F."/>
            <person name="Vassarotti A."/>
            <person name="Viari A."/>
            <person name="Wambutt R."/>
            <person name="Wedler E."/>
            <person name="Wedler H."/>
            <person name="Weitzenegger T."/>
            <person name="Winters P."/>
            <person name="Wipat A."/>
            <person name="Yamamoto H."/>
            <person name="Yamane K."/>
            <person name="Yasumoto K."/>
            <person name="Yata K."/>
            <person name="Yoshida K."/>
            <person name="Yoshikawa H.-F."/>
            <person name="Zumstein E."/>
            <person name="Yoshikawa H."/>
            <person name="Danchin A."/>
        </authorList>
    </citation>
    <scope>NUCLEOTIDE SEQUENCE [LARGE SCALE GENOMIC DNA]</scope>
    <source>
        <strain>168</strain>
    </source>
</reference>
<reference key="3">
    <citation type="journal article" date="2002" name="Microbiology">
        <title>Regulatory interactions between the Pho and sigma(B)-dependent general stress regulons of Bacillus subtilis.</title>
        <authorList>
            <person name="Pragai Z."/>
            <person name="Harwood C.R."/>
        </authorList>
    </citation>
    <scope>TRANSCRIPTIONAL REGULATION</scope>
</reference>
<comment type="induction">
    <text evidence="1">By phosphate starvation, via the PhoP/PhoR two-component regulatory system.</text>
</comment>
<keyword id="KW-1185">Reference proteome</keyword>
<keyword id="KW-0346">Stress response</keyword>